<reference key="1">
    <citation type="journal article" date="2007" name="PLoS Genet.">
        <title>Patterns and implications of gene gain and loss in the evolution of Prochlorococcus.</title>
        <authorList>
            <person name="Kettler G.C."/>
            <person name="Martiny A.C."/>
            <person name="Huang K."/>
            <person name="Zucker J."/>
            <person name="Coleman M.L."/>
            <person name="Rodrigue S."/>
            <person name="Chen F."/>
            <person name="Lapidus A."/>
            <person name="Ferriera S."/>
            <person name="Johnson J."/>
            <person name="Steglich C."/>
            <person name="Church G.M."/>
            <person name="Richardson P."/>
            <person name="Chisholm S.W."/>
        </authorList>
    </citation>
    <scope>NUCLEOTIDE SEQUENCE [LARGE SCALE GENOMIC DNA]</scope>
    <source>
        <strain>NATL2A</strain>
    </source>
</reference>
<accession>Q46JS1</accession>
<sequence>MSSESKLSQSEKELSGLVLEQKIKGSRKVSNYLVASMLSIGGVGFLLASFSSYFGRDFLPLGNPSTLIFVPQGLVMGLYGVAAFLLAIYFWRLINIDYGSGVNRFDKNKGVLSLSRRGLFKNIEIEIPIDEIKAVKLEVREGFNPLRRVSLRIKGRKDLPISRVGSPQPLLDLENEGAEIARFLEVNLEGI</sequence>
<organism>
    <name type="scientific">Prochlorococcus marinus (strain NATL2A)</name>
    <dbReference type="NCBI Taxonomy" id="59920"/>
    <lineage>
        <taxon>Bacteria</taxon>
        <taxon>Bacillati</taxon>
        <taxon>Cyanobacteriota</taxon>
        <taxon>Cyanophyceae</taxon>
        <taxon>Synechococcales</taxon>
        <taxon>Prochlorococcaceae</taxon>
        <taxon>Prochlorococcus</taxon>
    </lineage>
</organism>
<name>YCF4_PROMT</name>
<proteinExistence type="inferred from homology"/>
<gene>
    <name evidence="1" type="primary">ycf4</name>
    <name type="ordered locus">PMN2A_0766</name>
</gene>
<dbReference type="EMBL" id="CP000095">
    <property type="protein sequence ID" value="AAZ58257.1"/>
    <property type="molecule type" value="Genomic_DNA"/>
</dbReference>
<dbReference type="RefSeq" id="WP_011294854.1">
    <property type="nucleotide sequence ID" value="NC_007335.2"/>
</dbReference>
<dbReference type="STRING" id="59920.PMN2A_0766"/>
<dbReference type="KEGG" id="pmn:PMN2A_0766"/>
<dbReference type="HOGENOM" id="CLU_095465_0_0_3"/>
<dbReference type="OrthoDB" id="7059574at2"/>
<dbReference type="PhylomeDB" id="Q46JS1"/>
<dbReference type="Proteomes" id="UP000002535">
    <property type="component" value="Chromosome"/>
</dbReference>
<dbReference type="GO" id="GO:0009522">
    <property type="term" value="C:photosystem I"/>
    <property type="evidence" value="ECO:0007669"/>
    <property type="project" value="InterPro"/>
</dbReference>
<dbReference type="GO" id="GO:0031676">
    <property type="term" value="C:plasma membrane-derived thylakoid membrane"/>
    <property type="evidence" value="ECO:0007669"/>
    <property type="project" value="UniProtKB-SubCell"/>
</dbReference>
<dbReference type="GO" id="GO:0015979">
    <property type="term" value="P:photosynthesis"/>
    <property type="evidence" value="ECO:0007669"/>
    <property type="project" value="UniProtKB-UniRule"/>
</dbReference>
<dbReference type="HAMAP" id="MF_00437">
    <property type="entry name" value="Ycf4"/>
    <property type="match status" value="1"/>
</dbReference>
<dbReference type="InterPro" id="IPR003359">
    <property type="entry name" value="PSI_Ycf4_assembly"/>
</dbReference>
<dbReference type="NCBIfam" id="NF002712">
    <property type="entry name" value="PRK02542.1"/>
    <property type="match status" value="1"/>
</dbReference>
<dbReference type="Pfam" id="PF02392">
    <property type="entry name" value="Ycf4"/>
    <property type="match status" value="1"/>
</dbReference>
<comment type="function">
    <text evidence="1">Seems to be required for the assembly of the photosystem I complex.</text>
</comment>
<comment type="subcellular location">
    <subcellularLocation>
        <location evidence="1">Cellular thylakoid membrane</location>
        <topology evidence="1">Multi-pass membrane protein</topology>
    </subcellularLocation>
</comment>
<comment type="similarity">
    <text evidence="1">Belongs to the Ycf4 family.</text>
</comment>
<feature type="chain" id="PRO_1000025952" description="Photosystem I assembly protein Ycf4">
    <location>
        <begin position="1"/>
        <end position="191"/>
    </location>
</feature>
<feature type="transmembrane region" description="Helical" evidence="1">
    <location>
        <begin position="34"/>
        <end position="54"/>
    </location>
</feature>
<feature type="transmembrane region" description="Helical" evidence="1">
    <location>
        <begin position="68"/>
        <end position="88"/>
    </location>
</feature>
<keyword id="KW-0472">Membrane</keyword>
<keyword id="KW-0602">Photosynthesis</keyword>
<keyword id="KW-1185">Reference proteome</keyword>
<keyword id="KW-0793">Thylakoid</keyword>
<keyword id="KW-0812">Transmembrane</keyword>
<keyword id="KW-1133">Transmembrane helix</keyword>
<evidence type="ECO:0000255" key="1">
    <source>
        <dbReference type="HAMAP-Rule" id="MF_00437"/>
    </source>
</evidence>
<protein>
    <recommendedName>
        <fullName evidence="1">Photosystem I assembly protein Ycf4</fullName>
    </recommendedName>
</protein>